<organism>
    <name type="scientific">Salmonella gallinarum (strain 287/91 / NCTC 13346)</name>
    <dbReference type="NCBI Taxonomy" id="550538"/>
    <lineage>
        <taxon>Bacteria</taxon>
        <taxon>Pseudomonadati</taxon>
        <taxon>Pseudomonadota</taxon>
        <taxon>Gammaproteobacteria</taxon>
        <taxon>Enterobacterales</taxon>
        <taxon>Enterobacteriaceae</taxon>
        <taxon>Salmonella</taxon>
    </lineage>
</organism>
<name>OPGC_SALG2</name>
<comment type="function">
    <text evidence="1">Necessary for the succinyl substitution of periplasmic glucans. Could catalyze the transfer of succinyl residues from the cytoplasmic side of the membrane to the nascent glucan backbones on the periplasmic side of the membrane.</text>
</comment>
<comment type="pathway">
    <text evidence="1">Glycan metabolism; osmoregulated periplasmic glucan (OPG) biosynthesis.</text>
</comment>
<comment type="subcellular location">
    <subcellularLocation>
        <location evidence="1">Cell membrane</location>
        <topology evidence="1">Multi-pass membrane protein</topology>
    </subcellularLocation>
</comment>
<comment type="similarity">
    <text evidence="1">Belongs to the acyltransferase 3 family. OpgC subfamily.</text>
</comment>
<feature type="chain" id="PRO_1000136573" description="Glucans biosynthesis protein C">
    <location>
        <begin position="1"/>
        <end position="384"/>
    </location>
</feature>
<feature type="transmembrane region" description="Helical" evidence="1">
    <location>
        <begin position="17"/>
        <end position="37"/>
    </location>
</feature>
<feature type="transmembrane region" description="Helical" evidence="1">
    <location>
        <begin position="54"/>
        <end position="74"/>
    </location>
</feature>
<feature type="transmembrane region" description="Helical" evidence="1">
    <location>
        <begin position="91"/>
        <end position="111"/>
    </location>
</feature>
<feature type="transmembrane region" description="Helical" evidence="1">
    <location>
        <begin position="140"/>
        <end position="160"/>
    </location>
</feature>
<feature type="transmembrane region" description="Helical" evidence="1">
    <location>
        <begin position="173"/>
        <end position="193"/>
    </location>
</feature>
<feature type="transmembrane region" description="Helical" evidence="1">
    <location>
        <begin position="212"/>
        <end position="232"/>
    </location>
</feature>
<feature type="transmembrane region" description="Helical" evidence="1">
    <location>
        <begin position="240"/>
        <end position="260"/>
    </location>
</feature>
<feature type="transmembrane region" description="Helical" evidence="1">
    <location>
        <begin position="274"/>
        <end position="294"/>
    </location>
</feature>
<feature type="transmembrane region" description="Helical" evidence="1">
    <location>
        <begin position="311"/>
        <end position="331"/>
    </location>
</feature>
<feature type="transmembrane region" description="Helical" evidence="1">
    <location>
        <begin position="338"/>
        <end position="358"/>
    </location>
</feature>
<evidence type="ECO:0000255" key="1">
    <source>
        <dbReference type="HAMAP-Rule" id="MF_01066"/>
    </source>
</evidence>
<gene>
    <name evidence="1" type="primary">mdoC</name>
    <name evidence="1" type="synonym">opgC</name>
    <name type="ordered locus">SG1973</name>
</gene>
<protein>
    <recommendedName>
        <fullName evidence="1">Glucans biosynthesis protein C</fullName>
        <ecNumber evidence="1">2.1.-.-</ecNumber>
    </recommendedName>
</protein>
<dbReference type="EC" id="2.1.-.-" evidence="1"/>
<dbReference type="EMBL" id="AM933173">
    <property type="protein sequence ID" value="CAR37823.1"/>
    <property type="molecule type" value="Genomic_DNA"/>
</dbReference>
<dbReference type="RefSeq" id="WP_000100064.1">
    <property type="nucleotide sequence ID" value="NC_011274.1"/>
</dbReference>
<dbReference type="KEGG" id="seg:SG1973"/>
<dbReference type="HOGENOM" id="CLU_036182_2_0_6"/>
<dbReference type="UniPathway" id="UPA00637"/>
<dbReference type="Proteomes" id="UP000008321">
    <property type="component" value="Chromosome"/>
</dbReference>
<dbReference type="GO" id="GO:0005886">
    <property type="term" value="C:plasma membrane"/>
    <property type="evidence" value="ECO:0007669"/>
    <property type="project" value="UniProtKB-SubCell"/>
</dbReference>
<dbReference type="GO" id="GO:0016747">
    <property type="term" value="F:acyltransferase activity, transferring groups other than amino-acyl groups"/>
    <property type="evidence" value="ECO:0007669"/>
    <property type="project" value="InterPro"/>
</dbReference>
<dbReference type="GO" id="GO:0016741">
    <property type="term" value="F:transferase activity, transferring one-carbon groups"/>
    <property type="evidence" value="ECO:0007669"/>
    <property type="project" value="UniProtKB-UniRule"/>
</dbReference>
<dbReference type="GO" id="GO:0009250">
    <property type="term" value="P:glucan biosynthetic process"/>
    <property type="evidence" value="ECO:0007669"/>
    <property type="project" value="UniProtKB-UniRule"/>
</dbReference>
<dbReference type="HAMAP" id="MF_01066">
    <property type="entry name" value="MdoC_OpgC"/>
    <property type="match status" value="1"/>
</dbReference>
<dbReference type="InterPro" id="IPR002656">
    <property type="entry name" value="Acyl_transf_3_dom"/>
</dbReference>
<dbReference type="InterPro" id="IPR050623">
    <property type="entry name" value="Glucan_succinyl_AcylTrfase"/>
</dbReference>
<dbReference type="InterPro" id="IPR023723">
    <property type="entry name" value="Glucans_biosynth_C"/>
</dbReference>
<dbReference type="NCBIfam" id="NF003014">
    <property type="entry name" value="PRK03854.1"/>
    <property type="match status" value="1"/>
</dbReference>
<dbReference type="PANTHER" id="PTHR36927">
    <property type="entry name" value="BLR4337 PROTEIN"/>
    <property type="match status" value="1"/>
</dbReference>
<dbReference type="PANTHER" id="PTHR36927:SF3">
    <property type="entry name" value="GLUCANS BIOSYNTHESIS PROTEIN C"/>
    <property type="match status" value="1"/>
</dbReference>
<dbReference type="Pfam" id="PF01757">
    <property type="entry name" value="Acyl_transf_3"/>
    <property type="match status" value="1"/>
</dbReference>
<sequence>MSSVPAPREYFLDSIRAWLMLLGIPFHISLIYSTHSWHVNSATPSWWLTLFNDFIHAFRMQVFFVISGYFSYMLFLRYPLKRWWKVRVERVGIPMLTAIPLLTLPQFILLQYVKEKTENWPTLSAYEKYNTLAWELISHLWFLLVLVILTTVSIGIFTWFPKRQETSKPRPAAISLVRLSLIFFLLGMAYAAIRRIIFIVYPAILSDGMFNFIVMQTLFYVPFFILGALAFIHPDLKARFTTPSRGCTLGAAVAFIAYLLNQRYGSGDAWMYETESVITMVMGLWMVNVVFSLGHRLLNFQSARVTYFVNASLFIYLVHHPLTLFFGAYITPHISSNLIGFLCGLIFVMGIALILYEIHLRIPLLKFLFSGKPPVKQESRAAIG</sequence>
<keyword id="KW-0012">Acyltransferase</keyword>
<keyword id="KW-1003">Cell membrane</keyword>
<keyword id="KW-0472">Membrane</keyword>
<keyword id="KW-0808">Transferase</keyword>
<keyword id="KW-0812">Transmembrane</keyword>
<keyword id="KW-1133">Transmembrane helix</keyword>
<proteinExistence type="inferred from homology"/>
<reference key="1">
    <citation type="journal article" date="2008" name="Genome Res.">
        <title>Comparative genome analysis of Salmonella enteritidis PT4 and Salmonella gallinarum 287/91 provides insights into evolutionary and host adaptation pathways.</title>
        <authorList>
            <person name="Thomson N.R."/>
            <person name="Clayton D.J."/>
            <person name="Windhorst D."/>
            <person name="Vernikos G."/>
            <person name="Davidson S."/>
            <person name="Churcher C."/>
            <person name="Quail M.A."/>
            <person name="Stevens M."/>
            <person name="Jones M.A."/>
            <person name="Watson M."/>
            <person name="Barron A."/>
            <person name="Layton A."/>
            <person name="Pickard D."/>
            <person name="Kingsley R.A."/>
            <person name="Bignell A."/>
            <person name="Clark L."/>
            <person name="Harris B."/>
            <person name="Ormond D."/>
            <person name="Abdellah Z."/>
            <person name="Brooks K."/>
            <person name="Cherevach I."/>
            <person name="Chillingworth T."/>
            <person name="Woodward J."/>
            <person name="Norberczak H."/>
            <person name="Lord A."/>
            <person name="Arrowsmith C."/>
            <person name="Jagels K."/>
            <person name="Moule S."/>
            <person name="Mungall K."/>
            <person name="Saunders M."/>
            <person name="Whitehead S."/>
            <person name="Chabalgoity J.A."/>
            <person name="Maskell D."/>
            <person name="Humphreys T."/>
            <person name="Roberts M."/>
            <person name="Barrow P.A."/>
            <person name="Dougan G."/>
            <person name="Parkhill J."/>
        </authorList>
    </citation>
    <scope>NUCLEOTIDE SEQUENCE [LARGE SCALE GENOMIC DNA]</scope>
    <source>
        <strain>287/91 / NCTC 13346</strain>
    </source>
</reference>
<accession>B5RBF1</accession>